<accession>Q1C4D3</accession>
<comment type="function">
    <text evidence="1">NQR complex catalyzes the reduction of ubiquinone-1 to ubiquinol by two successive reactions, coupled with the transport of Na(+) ions from the cytoplasm to the periplasm. NqrA to NqrE are probably involved in the second step, the conversion of ubisemiquinone to ubiquinol.</text>
</comment>
<comment type="catalytic activity">
    <reaction evidence="1">
        <text>a ubiquinone + n Na(+)(in) + NADH + H(+) = a ubiquinol + n Na(+)(out) + NAD(+)</text>
        <dbReference type="Rhea" id="RHEA:47748"/>
        <dbReference type="Rhea" id="RHEA-COMP:9565"/>
        <dbReference type="Rhea" id="RHEA-COMP:9566"/>
        <dbReference type="ChEBI" id="CHEBI:15378"/>
        <dbReference type="ChEBI" id="CHEBI:16389"/>
        <dbReference type="ChEBI" id="CHEBI:17976"/>
        <dbReference type="ChEBI" id="CHEBI:29101"/>
        <dbReference type="ChEBI" id="CHEBI:57540"/>
        <dbReference type="ChEBI" id="CHEBI:57945"/>
        <dbReference type="EC" id="7.2.1.1"/>
    </reaction>
</comment>
<comment type="subunit">
    <text evidence="1">Composed of six subunits; NqrA, NqrB, NqrC, NqrD, NqrE and NqrF.</text>
</comment>
<comment type="subcellular location">
    <subcellularLocation>
        <location evidence="1">Cell inner membrane</location>
        <topology evidence="1">Multi-pass membrane protein</topology>
    </subcellularLocation>
</comment>
<comment type="similarity">
    <text evidence="1">Belongs to the NqrDE/RnfAE family.</text>
</comment>
<protein>
    <recommendedName>
        <fullName evidence="1">Na(+)-translocating NADH-quinone reductase subunit D</fullName>
        <shortName evidence="1">Na(+)-NQR subunit D</shortName>
        <shortName evidence="1">Na(+)-translocating NQR subunit D</shortName>
        <ecNumber evidence="1">7.2.1.1</ecNumber>
    </recommendedName>
    <alternativeName>
        <fullName evidence="1">NQR complex subunit D</fullName>
    </alternativeName>
    <alternativeName>
        <fullName evidence="1">NQR-1 subunit D</fullName>
    </alternativeName>
</protein>
<sequence length="209" mass="22643">MADSKEIKRVLLSPLFDNNPIALQILGVCSALAVTTKLETALVMTLAVTLVTAFSSFFISLIRNHIPNSVRIIVQMVIIASLVIVVDQVLRAYAYEISKQLSVFVGLIITNCIVMGRAEAYAMKSPPIESFMDGIGNGLGYGVILVLVGFVRELVGSGKLFGVTVLETVQNGGWYLPNGLFLLAPSAFFIIGLLIWGLRTLKPAQIEKE</sequence>
<gene>
    <name evidence="1" type="primary">nqrD</name>
    <name type="ordered locus">YPA_2727</name>
</gene>
<evidence type="ECO:0000255" key="1">
    <source>
        <dbReference type="HAMAP-Rule" id="MF_00428"/>
    </source>
</evidence>
<dbReference type="EC" id="7.2.1.1" evidence="1"/>
<dbReference type="EMBL" id="CP000308">
    <property type="protein sequence ID" value="ABG14689.1"/>
    <property type="molecule type" value="Genomic_DNA"/>
</dbReference>
<dbReference type="RefSeq" id="WP_002208714.1">
    <property type="nucleotide sequence ID" value="NZ_CP009906.1"/>
</dbReference>
<dbReference type="SMR" id="Q1C4D3"/>
<dbReference type="KEGG" id="ypa:YPA_2727"/>
<dbReference type="Proteomes" id="UP000001971">
    <property type="component" value="Chromosome"/>
</dbReference>
<dbReference type="GO" id="GO:0005886">
    <property type="term" value="C:plasma membrane"/>
    <property type="evidence" value="ECO:0007669"/>
    <property type="project" value="UniProtKB-SubCell"/>
</dbReference>
<dbReference type="GO" id="GO:0016655">
    <property type="term" value="F:oxidoreductase activity, acting on NAD(P)H, quinone or similar compound as acceptor"/>
    <property type="evidence" value="ECO:0007669"/>
    <property type="project" value="UniProtKB-UniRule"/>
</dbReference>
<dbReference type="GO" id="GO:0006814">
    <property type="term" value="P:sodium ion transport"/>
    <property type="evidence" value="ECO:0007669"/>
    <property type="project" value="UniProtKB-UniRule"/>
</dbReference>
<dbReference type="HAMAP" id="MF_00428">
    <property type="entry name" value="NqrD"/>
    <property type="match status" value="1"/>
</dbReference>
<dbReference type="InterPro" id="IPR011292">
    <property type="entry name" value="NqrD"/>
</dbReference>
<dbReference type="InterPro" id="IPR003667">
    <property type="entry name" value="NqrDE/RnfAE"/>
</dbReference>
<dbReference type="NCBIfam" id="TIGR01939">
    <property type="entry name" value="nqrD"/>
    <property type="match status" value="1"/>
</dbReference>
<dbReference type="NCBIfam" id="NF006777">
    <property type="entry name" value="PRK09292.1"/>
    <property type="match status" value="1"/>
</dbReference>
<dbReference type="NCBIfam" id="NF009070">
    <property type="entry name" value="PRK12405.1"/>
    <property type="match status" value="1"/>
</dbReference>
<dbReference type="PANTHER" id="PTHR30586">
    <property type="entry name" value="ELECTRON TRANSPORT COMPLEX PROTEIN RNFE"/>
    <property type="match status" value="1"/>
</dbReference>
<dbReference type="PANTHER" id="PTHR30586:SF1">
    <property type="entry name" value="NA(+)-TRANSLOCATING NADH-QUINONE REDUCTASE SUBUNIT D"/>
    <property type="match status" value="1"/>
</dbReference>
<dbReference type="Pfam" id="PF02508">
    <property type="entry name" value="Rnf-Nqr"/>
    <property type="match status" value="1"/>
</dbReference>
<dbReference type="PIRSF" id="PIRSF006102">
    <property type="entry name" value="NQR_DE"/>
    <property type="match status" value="1"/>
</dbReference>
<proteinExistence type="inferred from homology"/>
<reference key="1">
    <citation type="journal article" date="2006" name="J. Bacteriol.">
        <title>Complete genome sequence of Yersinia pestis strains Antiqua and Nepal516: evidence of gene reduction in an emerging pathogen.</title>
        <authorList>
            <person name="Chain P.S.G."/>
            <person name="Hu P."/>
            <person name="Malfatti S.A."/>
            <person name="Radnedge L."/>
            <person name="Larimer F."/>
            <person name="Vergez L.M."/>
            <person name="Worsham P."/>
            <person name="Chu M.C."/>
            <person name="Andersen G.L."/>
        </authorList>
    </citation>
    <scope>NUCLEOTIDE SEQUENCE [LARGE SCALE GENOMIC DNA]</scope>
    <source>
        <strain>Antiqua</strain>
    </source>
</reference>
<keyword id="KW-0997">Cell inner membrane</keyword>
<keyword id="KW-1003">Cell membrane</keyword>
<keyword id="KW-0406">Ion transport</keyword>
<keyword id="KW-0472">Membrane</keyword>
<keyword id="KW-0520">NAD</keyword>
<keyword id="KW-0915">Sodium</keyword>
<keyword id="KW-0739">Sodium transport</keyword>
<keyword id="KW-1278">Translocase</keyword>
<keyword id="KW-0812">Transmembrane</keyword>
<keyword id="KW-1133">Transmembrane helix</keyword>
<keyword id="KW-0813">Transport</keyword>
<keyword id="KW-0830">Ubiquinone</keyword>
<organism>
    <name type="scientific">Yersinia pestis bv. Antiqua (strain Antiqua)</name>
    <dbReference type="NCBI Taxonomy" id="360102"/>
    <lineage>
        <taxon>Bacteria</taxon>
        <taxon>Pseudomonadati</taxon>
        <taxon>Pseudomonadota</taxon>
        <taxon>Gammaproteobacteria</taxon>
        <taxon>Enterobacterales</taxon>
        <taxon>Yersiniaceae</taxon>
        <taxon>Yersinia</taxon>
    </lineage>
</organism>
<feature type="chain" id="PRO_1000060179" description="Na(+)-translocating NADH-quinone reductase subunit D">
    <location>
        <begin position="1"/>
        <end position="209"/>
    </location>
</feature>
<feature type="transmembrane region" description="Helical" evidence="1">
    <location>
        <begin position="42"/>
        <end position="62"/>
    </location>
</feature>
<feature type="transmembrane region" description="Helical" evidence="1">
    <location>
        <begin position="66"/>
        <end position="86"/>
    </location>
</feature>
<feature type="transmembrane region" description="Helical" evidence="1">
    <location>
        <begin position="103"/>
        <end position="123"/>
    </location>
</feature>
<feature type="transmembrane region" description="Helical" evidence="1">
    <location>
        <begin position="131"/>
        <end position="151"/>
    </location>
</feature>
<feature type="transmembrane region" description="Helical" evidence="1">
    <location>
        <begin position="178"/>
        <end position="198"/>
    </location>
</feature>
<name>NQRD_YERPA</name>